<dbReference type="EMBL" id="CP000483">
    <property type="protein sequence ID" value="ABL01400.1"/>
    <property type="molecule type" value="Genomic_DNA"/>
</dbReference>
<dbReference type="RefSeq" id="WP_011733919.1">
    <property type="nucleotide sequence ID" value="NC_008607.1"/>
</dbReference>
<dbReference type="SMR" id="A0R7K8"/>
<dbReference type="KEGG" id="ppd:Ppro_3812"/>
<dbReference type="eggNOG" id="COG0675">
    <property type="taxonomic scope" value="Bacteria"/>
</dbReference>
<dbReference type="HOGENOM" id="CLU_413243_0_0_7"/>
<dbReference type="OrthoDB" id="5788308at2"/>
<dbReference type="Proteomes" id="UP000006732">
    <property type="component" value="Plasmid pPRO1"/>
</dbReference>
<dbReference type="GO" id="GO:0003677">
    <property type="term" value="F:DNA binding"/>
    <property type="evidence" value="ECO:0007669"/>
    <property type="project" value="UniProtKB-KW"/>
</dbReference>
<dbReference type="GO" id="GO:0046872">
    <property type="term" value="F:metal ion binding"/>
    <property type="evidence" value="ECO:0007669"/>
    <property type="project" value="UniProtKB-KW"/>
</dbReference>
<dbReference type="GO" id="GO:0003723">
    <property type="term" value="F:RNA binding"/>
    <property type="evidence" value="ECO:0007669"/>
    <property type="project" value="UniProtKB-KW"/>
</dbReference>
<dbReference type="GO" id="GO:0051607">
    <property type="term" value="P:defense response to virus"/>
    <property type="evidence" value="ECO:0007669"/>
    <property type="project" value="UniProtKB-KW"/>
</dbReference>
<dbReference type="InterPro" id="IPR010095">
    <property type="entry name" value="Cas12f1-like_TNB"/>
</dbReference>
<dbReference type="Pfam" id="PF07282">
    <property type="entry name" value="Cas12f1-like_TNB"/>
    <property type="match status" value="1"/>
</dbReference>
<accession>A0R7K8</accession>
<protein>
    <recommendedName>
        <fullName evidence="3">CRISPR-associated DNA-binding protein Cas12m</fullName>
        <shortName evidence="3">PpCas12m</shortName>
    </recommendedName>
</protein>
<organism>
    <name type="scientific">Pelobacter propionicus (strain DSM 2379 / NBRC 103807 / OttBd1)</name>
    <dbReference type="NCBI Taxonomy" id="338966"/>
    <lineage>
        <taxon>Bacteria</taxon>
        <taxon>Pseudomonadati</taxon>
        <taxon>Thermodesulfobacteriota</taxon>
        <taxon>Desulfuromonadia</taxon>
        <taxon>Desulfuromonadales</taxon>
        <taxon>Desulfuromonadaceae</taxon>
        <taxon>Pelobacter</taxon>
    </lineage>
</organism>
<geneLocation type="plasmid" evidence="6">
    <name>pPRO1</name>
</geneLocation>
<comment type="function">
    <text evidence="2 5">CRISPR (clustered regularly interspaced short palindromic repeat), is an adaptive immune system that provides protection against mobile genetic elements (viruses, transposable elements and conjugative plasmids) (Probable) (PubMed:38261981). CRISPR clusters contain sequences complementary to antecedent mobile elements and target invading nucleic acids (Probable) (PubMed:38261981). CRISPR clusters are transcribed and processed into CRISPR RNA (crRNA) (PubMed:38261981). Recognizes a short motif in the CRISPR repeat sequences (the 5' PAM or protospacer adjacent motif, 5'-CCN-3' in this organism) to help distinguish self versus nonself, as targets within the bacterial CRISPR locus do not have PAMs (PubMed:38261981). Cas12m-crRNA binds DNA in a PAM-dependent, crRNA-guided fashion (PubMed:38261981). DNA-binding probably inhibits transcription, leading to gene silencing (Probable) (PubMed:38261981). Upon expression in E.coli as a CRISPR region preferentially binds to its associated crRNA (PubMed:38261981). Probably required for pre-crRNA processing to mature crRNA (Probable) (PubMed:38261981).</text>
</comment>
<comment type="cofactor">
    <cofactor evidence="1">
        <name>Mg(2+)</name>
        <dbReference type="ChEBI" id="CHEBI:18420"/>
    </cofactor>
    <text evidence="1">Binds only 1 Mg(2+) as opposed to 2 usually seen in other Cas12 enzymes; lack of the second Mg(2+) results in loss of target DNA cleavage activity.</text>
</comment>
<comment type="cofactor">
    <cofactor evidence="1">
        <name>Zn(2+)</name>
        <dbReference type="ChEBI" id="CHEBI:29105"/>
    </cofactor>
    <text evidence="1">Binds 1 Zn(2+) within the target nucleic-acid binding (TNB) domain.</text>
</comment>
<comment type="domain">
    <text evidence="1">Has a bilobed structure, with a recognition (REC) lobe and nuclease (NUC) lobe. The REC lobe (residues 1-390) is formed by the discontinuous recognition (REC) and wedge (WED) domains, while the NUC lobe (residues 405-664) is formed by the discontinuous RuvC and target nucleic-acid binding (TNB) domains. The crRNA-single-strand target DNA duplex is bound in the central channel between the 2 lobes while the non-target single stranded DNA is bound to pockets in the REC and RuvC domains.</text>
</comment>
<comment type="miscellaneous">
    <text evidence="5">Part of a type V-M CRISPR-Cas system.</text>
</comment>
<comment type="similarity">
    <text evidence="3">Belongs to the CRISPR-associated DNA-binding protein Cas12m family.</text>
</comment>
<reference evidence="6" key="1">
    <citation type="submission" date="2006-10" db="EMBL/GenBank/DDBJ databases">
        <title>Complete sequence of plasmid pPRO1 of Pelobacter propionicus DSM 2379.</title>
        <authorList>
            <consortium name="US DOE Joint Genome Institute"/>
            <person name="Copeland A."/>
            <person name="Lucas S."/>
            <person name="Lapidus A."/>
            <person name="Barry K."/>
            <person name="Detter J.C."/>
            <person name="Glavina del Rio T."/>
            <person name="Hammon N."/>
            <person name="Israni S."/>
            <person name="Dalin E."/>
            <person name="Tice H."/>
            <person name="Pitluck S."/>
            <person name="Saunders E."/>
            <person name="Brettin T."/>
            <person name="Bruce D."/>
            <person name="Han C."/>
            <person name="Tapia R."/>
            <person name="Schmutz J."/>
            <person name="Larimer F."/>
            <person name="Land M."/>
            <person name="Hauser L."/>
            <person name="Kyrpides N."/>
            <person name="Kim E."/>
            <person name="Lovley D."/>
            <person name="Richardson P."/>
        </authorList>
    </citation>
    <scope>NUCLEOTIDE SEQUENCE [LARGE SCALE GENOMIC DNA]</scope>
    <source>
        <strain>DSM 2379 / NBRC 103807 / OttBd1</strain>
        <plasmid>pPRO1</plasmid>
    </source>
</reference>
<reference key="2">
    <citation type="journal article" date="2024" name="Nucleic Acids Res.">
        <title>Innate programmable DNA binding by CRISPR-Cas12m effectors enable efficient base editing.</title>
        <authorList>
            <person name="Bigelyte G."/>
            <person name="Duchovska B."/>
            <person name="Zedaveinyte R."/>
            <person name="Sasnauskas G."/>
            <person name="Sinkunas T."/>
            <person name="Dalgediene I."/>
            <person name="Tamulaitiene G."/>
            <person name="Silanskas A."/>
            <person name="Kazlauskas D."/>
            <person name="Valancauskas L."/>
            <person name="Madariaga-Marcos J."/>
            <person name="Seidel R."/>
            <person name="Siksnys V."/>
            <person name="Karvelis T."/>
        </authorList>
    </citation>
    <scope>FUNCTION</scope>
    <scope>DNA-BINDING</scope>
    <scope>RNA-BINDING</scope>
    <source>
        <strain>DSM 2379 / NBRC 103807 / OttBd1</strain>
        <plasmid>pPRO1</plasmid>
    </source>
</reference>
<gene>
    <name evidence="3" type="primary">cas12m</name>
    <name evidence="6" type="ordered locus">Ppro_3812</name>
</gene>
<sequence>MKRVTITIDGEQTKGIVIGTIAANHTAAEWLLTASVSAKSAKVRFDPEEAVAETSSLVMIAPTRTEKYLYLVPDEQVQPVTTIVRKYGLLSPLDWDCPDYPAGDAFEHLFLQNKLWNDLVTIEREHRAKYRELIGSDEETAQMDTEIASIKDRLSVLDEGRKKLRVEHRKKKCPEIDCLDENIKKLKSELKAVASKAKETRAAAKDRIRAAGNDIENLEKDRQAAVIKAYNNSGLWWGNYNAVLESYKKARIKALKDGAELKYHRFDGSGRFTNQIQGGMSVQDLLEGNRNVASLRLVSSGELGDISGKKPPSLDLQSVGSRRDSREYGILAITLYTGTDEQSKKFRRTLSFPVILHRPLPEGATLKSLSVHRKRVGTDFVWSVVFTFTTDCPTYDQRSSTGNRCGLNLGWKKQAGGGLRVATIYDGSDARHITLPQAIIDGLDYVNGDLQGRIDSAANENHAWLLEQWGGDELPESLQELRSMLRRSKRPHPAKFAKAVIAWRNYPEYLGDARDEAEQRRKATKRLTIEMAHKREKLLRRRMDFYRNTAKQLTSVYDVICLDKMDLRRLALLEKGDGTPNELTKIARKQRQQAAISELRECLSKAAAKNGTQIEQVSTASSATCSACKGKMEQVDGIMWRCRECRALVDQDINAAANLFREVL</sequence>
<name>CS12M_PELPD</name>
<keyword id="KW-0051">Antiviral defense</keyword>
<keyword id="KW-0238">DNA-binding</keyword>
<keyword id="KW-0460">Magnesium</keyword>
<keyword id="KW-0479">Metal-binding</keyword>
<keyword id="KW-0614">Plasmid</keyword>
<keyword id="KW-1185">Reference proteome</keyword>
<keyword id="KW-0694">RNA-binding</keyword>
<keyword id="KW-0804">Transcription</keyword>
<keyword id="KW-0805">Transcription regulation</keyword>
<keyword id="KW-0862">Zinc</keyword>
<evidence type="ECO:0000250" key="1">
    <source>
        <dbReference type="UniProtKB" id="P0DXB1"/>
    </source>
</evidence>
<evidence type="ECO:0000269" key="2">
    <source>
    </source>
</evidence>
<evidence type="ECO:0000303" key="3">
    <source>
    </source>
</evidence>
<evidence type="ECO:0000305" key="4"/>
<evidence type="ECO:0000305" key="5">
    <source>
    </source>
</evidence>
<evidence type="ECO:0000312" key="6">
    <source>
        <dbReference type="EMBL" id="ABL01400.1"/>
    </source>
</evidence>
<feature type="chain" id="PRO_0000460485" description="CRISPR-associated DNA-binding protein Cas12m">
    <location>
        <begin position="1"/>
        <end position="664"/>
    </location>
</feature>
<feature type="region of interest" description="Recognition domain (REC1-N)" evidence="1">
    <location>
        <begin position="1"/>
        <end position="137"/>
    </location>
</feature>
<feature type="region of interest" description="Recognition domain (REC2)" evidence="1">
    <location>
        <begin position="138"/>
        <end position="212"/>
    </location>
</feature>
<feature type="region of interest" description="Recognition domain (REC1-C)" evidence="1">
    <location>
        <begin position="213"/>
        <end position="270"/>
    </location>
</feature>
<feature type="region of interest" description="Wedge domain (WED)" evidence="1">
    <location>
        <begin position="271"/>
        <end position="390"/>
    </location>
</feature>
<feature type="region of interest" description="Linker" evidence="1">
    <location>
        <begin position="391"/>
        <end position="404"/>
    </location>
</feature>
<feature type="region of interest" description="RuvC-I" evidence="1">
    <location>
        <begin position="405"/>
        <end position="618"/>
    </location>
</feature>
<feature type="region of interest" description="Target nucleic-acid binding (TNB)" evidence="1">
    <location>
        <begin position="618"/>
        <end position="650"/>
    </location>
</feature>
<feature type="region of interest" description="RuvC-II" evidence="1">
    <location>
        <begin position="651"/>
        <end position="664"/>
    </location>
</feature>
<feature type="binding site" evidence="4">
    <location>
        <position position="625"/>
    </location>
    <ligand>
        <name>Zn(2+)</name>
        <dbReference type="ChEBI" id="CHEBI:29105"/>
    </ligand>
</feature>
<feature type="binding site" evidence="1">
    <location>
        <position position="628"/>
    </location>
    <ligand>
        <name>Zn(2+)</name>
        <dbReference type="ChEBI" id="CHEBI:29105"/>
    </ligand>
</feature>
<feature type="binding site" evidence="1">
    <location>
        <position position="642"/>
    </location>
    <ligand>
        <name>Zn(2+)</name>
        <dbReference type="ChEBI" id="CHEBI:29105"/>
    </ligand>
</feature>
<feature type="binding site" evidence="1">
    <location>
        <position position="645"/>
    </location>
    <ligand>
        <name>Zn(2+)</name>
        <dbReference type="ChEBI" id="CHEBI:29105"/>
    </ligand>
</feature>
<feature type="binding site" evidence="1">
    <location>
        <position position="652"/>
    </location>
    <ligand>
        <name>Mg(2+)</name>
        <dbReference type="ChEBI" id="CHEBI:18420"/>
    </ligand>
</feature>
<proteinExistence type="evidence at protein level"/>